<proteinExistence type="evidence at transcript level"/>
<reference key="1">
    <citation type="journal article" date="2002" name="J. Bacteriol.">
        <title>Genetic and biochemical characterization of a 2,4,6-trichlorophenol degradation pathway in Ralstonia eutropha JMP134.</title>
        <authorList>
            <person name="Louie T.M."/>
            <person name="Webster C.M."/>
            <person name="Xun L."/>
        </authorList>
    </citation>
    <scope>NUCLEOTIDE SEQUENCE [GENOMIC DNA]</scope>
    <scope>FUNCTION</scope>
    <scope>INDUCTION</scope>
    <scope>DISRUPTION PHENOTYPE</scope>
    <source>
        <strain>JMP134 / LMG 1197</strain>
    </source>
</reference>
<reference key="2">
    <citation type="journal article" date="2010" name="PLoS ONE">
        <title>The complete multipartite genome sequence of Cupriavidus necator JMP134, a versatile pollutant degrader.</title>
        <authorList>
            <person name="Lykidis A."/>
            <person name="Perez-Pantoja D."/>
            <person name="Ledger T."/>
            <person name="Mavromatis K."/>
            <person name="Anderson I.J."/>
            <person name="Ivanova N.N."/>
            <person name="Hooper S.D."/>
            <person name="Lapidus A."/>
            <person name="Lucas S."/>
            <person name="Gonzalez B."/>
            <person name="Kyrpides N.C."/>
        </authorList>
    </citation>
    <scope>NUCLEOTIDE SEQUENCE [LARGE SCALE GENOMIC DNA]</scope>
    <source>
        <strain>JMP134 / LMG 1197</strain>
    </source>
</reference>
<reference key="3">
    <citation type="journal article" date="2003" name="Appl. Environ. Microbiol.">
        <title>Efficient degradation of 2,4,6-Trichlorophenol requires a set of catabolic genes related to tcp genes from Ralstonia eutropha JMP134(pJP4).</title>
        <authorList>
            <person name="Matus V."/>
            <person name="Sanchez M.A."/>
            <person name="Martinez M."/>
            <person name="Gonzalez B."/>
        </authorList>
    </citation>
    <scope>FUNCTION</scope>
    <scope>GENE CLUSTER</scope>
    <source>
        <strain>JMP134 / LMG 1197</strain>
    </source>
</reference>
<reference key="4">
    <citation type="journal article" date="2007" name="Appl. Environ. Microbiol.">
        <title>Genetic characterization of 2,4,6-trichlorophenol degradation in Cupriavidus necator JMP134.</title>
        <authorList>
            <person name="Sanchez M.A."/>
            <person name="Gonzalez B."/>
        </authorList>
    </citation>
    <scope>FUNCTION</scope>
    <scope>DISRUPTION PHENOTYPE</scope>
    <source>
        <strain>JMP134 / LMG 1197</strain>
    </source>
</reference>
<evidence type="ECO:0000250" key="1">
    <source>
        <dbReference type="UniProtKB" id="Q5PXQ6"/>
    </source>
</evidence>
<evidence type="ECO:0000269" key="2">
    <source>
    </source>
</evidence>
<evidence type="ECO:0000269" key="3">
    <source>
    </source>
</evidence>
<evidence type="ECO:0000269" key="4">
    <source>
    </source>
</evidence>
<evidence type="ECO:0000303" key="5">
    <source>
    </source>
</evidence>
<evidence type="ECO:0000303" key="6">
    <source>
    </source>
</evidence>
<evidence type="ECO:0000305" key="7"/>
<evidence type="ECO:0000305" key="8">
    <source>
    </source>
</evidence>
<evidence type="ECO:0000312" key="9">
    <source>
        <dbReference type="EMBL" id="AAZ60953.1"/>
    </source>
</evidence>
<dbReference type="EC" id="1.13.11.-" evidence="8"/>
<dbReference type="EMBL" id="AF498371">
    <property type="protein sequence ID" value="AAM55216.1"/>
    <property type="molecule type" value="Genomic_DNA"/>
</dbReference>
<dbReference type="EMBL" id="CP000090">
    <property type="protein sequence ID" value="AAZ60953.1"/>
    <property type="molecule type" value="Genomic_DNA"/>
</dbReference>
<dbReference type="SMR" id="Q471I0"/>
<dbReference type="STRING" id="264198.Reut_A1587"/>
<dbReference type="KEGG" id="reu:Reut_A1587"/>
<dbReference type="eggNOG" id="COG3485">
    <property type="taxonomic scope" value="Bacteria"/>
</dbReference>
<dbReference type="HOGENOM" id="CLU_046727_1_1_4"/>
<dbReference type="OrthoDB" id="9800887at2"/>
<dbReference type="BioCyc" id="MetaCyc:REUT_A1587-MONOMER"/>
<dbReference type="GO" id="GO:0018576">
    <property type="term" value="F:catechol 1,2-dioxygenase activity"/>
    <property type="evidence" value="ECO:0007669"/>
    <property type="project" value="UniProtKB-EC"/>
</dbReference>
<dbReference type="GO" id="GO:0008199">
    <property type="term" value="F:ferric iron binding"/>
    <property type="evidence" value="ECO:0007669"/>
    <property type="project" value="InterPro"/>
</dbReference>
<dbReference type="GO" id="GO:0009056">
    <property type="term" value="P:catabolic process"/>
    <property type="evidence" value="ECO:0007669"/>
    <property type="project" value="UniProtKB-KW"/>
</dbReference>
<dbReference type="GO" id="GO:0009712">
    <property type="term" value="P:catechol-containing compound metabolic process"/>
    <property type="evidence" value="ECO:0007669"/>
    <property type="project" value="InterPro"/>
</dbReference>
<dbReference type="CDD" id="cd03461">
    <property type="entry name" value="1_2-HQD"/>
    <property type="match status" value="1"/>
</dbReference>
<dbReference type="Gene3D" id="2.60.130.10">
    <property type="entry name" value="Aromatic compound dioxygenase"/>
    <property type="match status" value="1"/>
</dbReference>
<dbReference type="InterPro" id="IPR039390">
    <property type="entry name" value="1_2-HQD/HQD"/>
</dbReference>
<dbReference type="InterPro" id="IPR007535">
    <property type="entry name" value="Catechol_dOase_N"/>
</dbReference>
<dbReference type="InterPro" id="IPR000627">
    <property type="entry name" value="Intradiol_dOase_C"/>
</dbReference>
<dbReference type="InterPro" id="IPR015889">
    <property type="entry name" value="Intradiol_dOase_core"/>
</dbReference>
<dbReference type="InterPro" id="IPR050770">
    <property type="entry name" value="Intradiol_RC_Dioxygenase"/>
</dbReference>
<dbReference type="PANTHER" id="PTHR33711">
    <property type="entry name" value="DIOXYGENASE, PUTATIVE (AFU_ORTHOLOGUE AFUA_2G02910)-RELATED"/>
    <property type="match status" value="1"/>
</dbReference>
<dbReference type="PANTHER" id="PTHR33711:SF7">
    <property type="entry name" value="INTRADIOL RING-CLEAVAGE DIOXYGENASES DOMAIN-CONTAINING PROTEIN-RELATED"/>
    <property type="match status" value="1"/>
</dbReference>
<dbReference type="Pfam" id="PF00775">
    <property type="entry name" value="Dioxygenase_C"/>
    <property type="match status" value="1"/>
</dbReference>
<dbReference type="Pfam" id="PF04444">
    <property type="entry name" value="Dioxygenase_N"/>
    <property type="match status" value="1"/>
</dbReference>
<dbReference type="SUPFAM" id="SSF49482">
    <property type="entry name" value="Aromatic compound dioxygenase"/>
    <property type="match status" value="1"/>
</dbReference>
<name>TCPC_CUPPJ</name>
<sequence>MQEYDQHNLTKAVIARLADTPNARTKQIMTSLVRHLHDFAREVRLTEAEWKQGIDYLTATGQMCDDKRQEFILLSDVLGLSMLTVAMNQEKPEGCTEPTVFGPFHVEGAPHYAHGADVANGAKGEPCMVYGRVTGVDGRPVAGAVVETWQADADGHYDVQYEGLEVAQGRGVLKSGEDGRFHFRTIVAQAYPIPDDGPVGELLRATGRHPWRPAHLHFMIKAPGYETLVTHVFRRGDKYLDSDAVFGVRTSLIGDWVRQTDGTYRLDFDFVLNPTL</sequence>
<comment type="function">
    <text evidence="2 3 4">Involved in the degradation of 2,4,6-trichlorophenol (2,4,6-TCP) (PubMed:12057943, PubMed:14660355, PubMed:17322325). May catalyze the oxidation of 6-chlorohydroxyquinol (6-CHQ) to 2-chloromaleylacetate (2-CMA) (PubMed:12057943).</text>
</comment>
<comment type="cofactor">
    <cofactor evidence="1">
        <name>Fe(3+)</name>
        <dbReference type="ChEBI" id="CHEBI:29034"/>
    </cofactor>
    <text evidence="1">Binds 1 Fe(3+) ion per subunit.</text>
</comment>
<comment type="pathway">
    <text evidence="7">Aromatic compound metabolism.</text>
</comment>
<comment type="pathway">
    <text evidence="7">Xenobiotic degradation.</text>
</comment>
<comment type="induction">
    <text evidence="2">Induced by 2,4,6-TCP and subject to catabolic repression by glutamate.</text>
</comment>
<comment type="disruption phenotype">
    <text evidence="2 4">Disruption mutant is unable to grow on 2,4,6-TCP, but it can still transform this compound to 6-CHQ (PubMed:12057943, PubMed:17322325). Mutant accumulates an oxidized product of 6-CHQ (PubMed:12057943).</text>
</comment>
<comment type="similarity">
    <text evidence="7">Belongs to the intradiol ring-cleavage dioxygenase family.</text>
</comment>
<feature type="chain" id="PRO_0000456792" description="6-chlorohydroxyquinol 1,2-dioxygenase">
    <location>
        <begin position="1"/>
        <end position="276"/>
    </location>
</feature>
<feature type="binding site" evidence="1">
    <location>
        <position position="157"/>
    </location>
    <ligand>
        <name>Fe cation</name>
        <dbReference type="ChEBI" id="CHEBI:24875"/>
    </ligand>
</feature>
<feature type="binding site" evidence="1">
    <location>
        <position position="191"/>
    </location>
    <ligand>
        <name>Fe cation</name>
        <dbReference type="ChEBI" id="CHEBI:24875"/>
    </ligand>
</feature>
<feature type="binding site" evidence="1">
    <location>
        <position position="215"/>
    </location>
    <ligand>
        <name>Fe cation</name>
        <dbReference type="ChEBI" id="CHEBI:24875"/>
    </ligand>
</feature>
<feature type="binding site" evidence="1">
    <location>
        <position position="217"/>
    </location>
    <ligand>
        <name>Fe cation</name>
        <dbReference type="ChEBI" id="CHEBI:24875"/>
    </ligand>
</feature>
<organism>
    <name type="scientific">Cupriavidus pinatubonensis (strain JMP 134 / LMG 1197)</name>
    <name type="common">Cupriavidus necator (strain JMP 134)</name>
    <dbReference type="NCBI Taxonomy" id="264198"/>
    <lineage>
        <taxon>Bacteria</taxon>
        <taxon>Pseudomonadati</taxon>
        <taxon>Pseudomonadota</taxon>
        <taxon>Betaproteobacteria</taxon>
        <taxon>Burkholderiales</taxon>
        <taxon>Burkholderiaceae</taxon>
        <taxon>Cupriavidus</taxon>
    </lineage>
</organism>
<gene>
    <name evidence="5" type="primary">tcpC</name>
    <name evidence="9" type="ordered locus">Reut_A1587</name>
</gene>
<protein>
    <recommendedName>
        <fullName evidence="6">6-chlorohydroxyquinol 1,2-dioxygenase</fullName>
        <shortName evidence="5">6-CHQ 1,2-dioxygenase</shortName>
        <ecNumber evidence="8">1.13.11.-</ecNumber>
    </recommendedName>
</protein>
<accession>Q471I0</accession>
<accession>Q8KTD6</accession>
<keyword id="KW-0058">Aromatic hydrocarbons catabolism</keyword>
<keyword id="KW-0223">Dioxygenase</keyword>
<keyword id="KW-0408">Iron</keyword>
<keyword id="KW-0479">Metal-binding</keyword>
<keyword id="KW-0560">Oxidoreductase</keyword>